<sequence length="556" mass="61292">MSVSAFNRRWAAVILEALTRHGVRHICIAPGSRSTPLTLAAAENSAFIHHTHFDERGLGHLALGLAKVSKQPVAVIVTSGTAVANLYPALIEAGLTGEKLILLTADRPPELIDCGANQAIRQPGMFASHPTHSISLPRPTQDIPARWLVSTIDHALGTLHAGGVHINCPFAEPLYGEMDDTGLSWQQRLGDWWQDDKPWLREAPRLESEKQRDWFFWRQKRGVVVAGRMSAEEGKKVALWAQTLGWPLIGDVLSQTGQPLPCADLWLGNAKATSELQQAQIVVQLGSSLTGKRLLQWQASCEPEEYWIVDDIEGRLDPAHHRGRRLIANIADWLELHPAEKRQPWCVEIPRLAEQAMQAVIACRDAFGEAQLAHRISDYLPEQGQLFVGNSLVVRLIDALSQLPAGYPVYSNRGASGIDGLLSTAAGVQRASGKPTLAIVGDLSALYDLNALALLRQVSAPLVLIVVNNNGGQIFSLLPTPKSERERFYLMPQNVHFEHAAAMFELKYHRPQNWQELETVLADAWRTPTTTVIEMVVNDTDGAQTLQQLLAQVSHL</sequence>
<proteinExistence type="inferred from homology"/>
<protein>
    <recommendedName>
        <fullName evidence="1">2-succinyl-5-enolpyruvyl-6-hydroxy-3-cyclohexene-1-carboxylate synthase</fullName>
        <shortName evidence="1">SEPHCHC synthase</shortName>
        <ecNumber evidence="1">2.2.1.9</ecNumber>
    </recommendedName>
    <alternativeName>
        <fullName evidence="1">Menaquinone biosynthesis protein MenD</fullName>
    </alternativeName>
</protein>
<keyword id="KW-0460">Magnesium</keyword>
<keyword id="KW-0464">Manganese</keyword>
<keyword id="KW-0474">Menaquinone biosynthesis</keyword>
<keyword id="KW-0479">Metal-binding</keyword>
<keyword id="KW-1185">Reference proteome</keyword>
<keyword id="KW-0786">Thiamine pyrophosphate</keyword>
<keyword id="KW-0808">Transferase</keyword>
<name>MEND_ECO57</name>
<dbReference type="EC" id="2.2.1.9" evidence="1"/>
<dbReference type="EMBL" id="AE005174">
    <property type="protein sequence ID" value="AAG57397.1"/>
    <property type="status" value="ALT_SEQ"/>
    <property type="molecule type" value="Genomic_DNA"/>
</dbReference>
<dbReference type="EMBL" id="BA000007">
    <property type="protein sequence ID" value="BAB36575.1"/>
    <property type="molecule type" value="Genomic_DNA"/>
</dbReference>
<dbReference type="PIR" id="A85867">
    <property type="entry name" value="A85867"/>
</dbReference>
<dbReference type="PIR" id="H91022">
    <property type="entry name" value="H91022"/>
</dbReference>
<dbReference type="RefSeq" id="NP_311179.1">
    <property type="nucleotide sequence ID" value="NC_002695.1"/>
</dbReference>
<dbReference type="RefSeq" id="WP_001301869.1">
    <property type="nucleotide sequence ID" value="NZ_VOAI01000001.1"/>
</dbReference>
<dbReference type="SMR" id="Q8XDX8"/>
<dbReference type="STRING" id="155864.Z3524"/>
<dbReference type="GeneID" id="916860"/>
<dbReference type="KEGG" id="ece:Z3524"/>
<dbReference type="KEGG" id="ecs:ECs_3152"/>
<dbReference type="PATRIC" id="fig|386585.9.peg.3289"/>
<dbReference type="eggNOG" id="COG1165">
    <property type="taxonomic scope" value="Bacteria"/>
</dbReference>
<dbReference type="HOGENOM" id="CLU_006051_3_0_6"/>
<dbReference type="OMA" id="YDSNALW"/>
<dbReference type="UniPathway" id="UPA00079"/>
<dbReference type="UniPathway" id="UPA01057">
    <property type="reaction ID" value="UER00164"/>
</dbReference>
<dbReference type="Proteomes" id="UP000000558">
    <property type="component" value="Chromosome"/>
</dbReference>
<dbReference type="Proteomes" id="UP000002519">
    <property type="component" value="Chromosome"/>
</dbReference>
<dbReference type="GO" id="GO:0070204">
    <property type="term" value="F:2-succinyl-5-enolpyruvyl-6-hydroxy-3-cyclohexene-1-carboxylic-acid synthase activity"/>
    <property type="evidence" value="ECO:0007669"/>
    <property type="project" value="UniProtKB-UniRule"/>
</dbReference>
<dbReference type="GO" id="GO:0000287">
    <property type="term" value="F:magnesium ion binding"/>
    <property type="evidence" value="ECO:0007669"/>
    <property type="project" value="UniProtKB-UniRule"/>
</dbReference>
<dbReference type="GO" id="GO:0030145">
    <property type="term" value="F:manganese ion binding"/>
    <property type="evidence" value="ECO:0007669"/>
    <property type="project" value="UniProtKB-UniRule"/>
</dbReference>
<dbReference type="GO" id="GO:0030976">
    <property type="term" value="F:thiamine pyrophosphate binding"/>
    <property type="evidence" value="ECO:0007669"/>
    <property type="project" value="UniProtKB-UniRule"/>
</dbReference>
<dbReference type="GO" id="GO:0009234">
    <property type="term" value="P:menaquinone biosynthetic process"/>
    <property type="evidence" value="ECO:0007669"/>
    <property type="project" value="UniProtKB-UniRule"/>
</dbReference>
<dbReference type="CDD" id="cd07037">
    <property type="entry name" value="TPP_PYR_MenD"/>
    <property type="match status" value="1"/>
</dbReference>
<dbReference type="CDD" id="cd02009">
    <property type="entry name" value="TPP_SHCHC_synthase"/>
    <property type="match status" value="1"/>
</dbReference>
<dbReference type="FunFam" id="3.40.50.1220:FF:000010">
    <property type="entry name" value="2-succinyl-5-enolpyruvyl-6-hydroxy-3-cyclohexene-1-carboxylate synthase"/>
    <property type="match status" value="1"/>
</dbReference>
<dbReference type="FunFam" id="3.40.50.970:FF:000029">
    <property type="entry name" value="2-succinyl-5-enolpyruvyl-6-hydroxy-3-cyclohexene-1-carboxylate synthase"/>
    <property type="match status" value="1"/>
</dbReference>
<dbReference type="Gene3D" id="3.40.50.970">
    <property type="match status" value="2"/>
</dbReference>
<dbReference type="Gene3D" id="3.40.50.1220">
    <property type="entry name" value="TPP-binding domain"/>
    <property type="match status" value="1"/>
</dbReference>
<dbReference type="HAMAP" id="MF_01659">
    <property type="entry name" value="MenD"/>
    <property type="match status" value="1"/>
</dbReference>
<dbReference type="InterPro" id="IPR004433">
    <property type="entry name" value="MenaQ_synth_MenD"/>
</dbReference>
<dbReference type="InterPro" id="IPR032264">
    <property type="entry name" value="MenD_middle"/>
</dbReference>
<dbReference type="InterPro" id="IPR029061">
    <property type="entry name" value="THDP-binding"/>
</dbReference>
<dbReference type="InterPro" id="IPR012001">
    <property type="entry name" value="Thiamin_PyroP_enz_TPP-bd_dom"/>
</dbReference>
<dbReference type="InterPro" id="IPR011766">
    <property type="entry name" value="TPP_enzyme_TPP-bd"/>
</dbReference>
<dbReference type="NCBIfam" id="TIGR00173">
    <property type="entry name" value="menD"/>
    <property type="match status" value="1"/>
</dbReference>
<dbReference type="PANTHER" id="PTHR42916">
    <property type="entry name" value="2-SUCCINYL-5-ENOLPYRUVYL-6-HYDROXY-3-CYCLOHEXENE-1-CARBOXYLATE SYNTHASE"/>
    <property type="match status" value="1"/>
</dbReference>
<dbReference type="PANTHER" id="PTHR42916:SF1">
    <property type="entry name" value="PROTEIN PHYLLO, CHLOROPLASTIC"/>
    <property type="match status" value="1"/>
</dbReference>
<dbReference type="Pfam" id="PF02775">
    <property type="entry name" value="TPP_enzyme_C"/>
    <property type="match status" value="1"/>
</dbReference>
<dbReference type="Pfam" id="PF16582">
    <property type="entry name" value="TPP_enzyme_M_2"/>
    <property type="match status" value="1"/>
</dbReference>
<dbReference type="Pfam" id="PF02776">
    <property type="entry name" value="TPP_enzyme_N"/>
    <property type="match status" value="1"/>
</dbReference>
<dbReference type="PIRSF" id="PIRSF004983">
    <property type="entry name" value="MenD"/>
    <property type="match status" value="1"/>
</dbReference>
<dbReference type="SUPFAM" id="SSF52518">
    <property type="entry name" value="Thiamin diphosphate-binding fold (THDP-binding)"/>
    <property type="match status" value="2"/>
</dbReference>
<evidence type="ECO:0000255" key="1">
    <source>
        <dbReference type="HAMAP-Rule" id="MF_01659"/>
    </source>
</evidence>
<accession>Q8XDX8</accession>
<accession>Q7AC16</accession>
<feature type="chain" id="PRO_0000341742" description="2-succinyl-5-enolpyruvyl-6-hydroxy-3-cyclohexene-1-carboxylate synthase">
    <location>
        <begin position="1"/>
        <end position="556"/>
    </location>
</feature>
<reference key="1">
    <citation type="journal article" date="2001" name="Nature">
        <title>Genome sequence of enterohaemorrhagic Escherichia coli O157:H7.</title>
        <authorList>
            <person name="Perna N.T."/>
            <person name="Plunkett G. III"/>
            <person name="Burland V."/>
            <person name="Mau B."/>
            <person name="Glasner J.D."/>
            <person name="Rose D.J."/>
            <person name="Mayhew G.F."/>
            <person name="Evans P.S."/>
            <person name="Gregor J."/>
            <person name="Kirkpatrick H.A."/>
            <person name="Posfai G."/>
            <person name="Hackett J."/>
            <person name="Klink S."/>
            <person name="Boutin A."/>
            <person name="Shao Y."/>
            <person name="Miller L."/>
            <person name="Grotbeck E.J."/>
            <person name="Davis N.W."/>
            <person name="Lim A."/>
            <person name="Dimalanta E.T."/>
            <person name="Potamousis K."/>
            <person name="Apodaca J."/>
            <person name="Anantharaman T.S."/>
            <person name="Lin J."/>
            <person name="Yen G."/>
            <person name="Schwartz D.C."/>
            <person name="Welch R.A."/>
            <person name="Blattner F.R."/>
        </authorList>
    </citation>
    <scope>NUCLEOTIDE SEQUENCE [LARGE SCALE GENOMIC DNA]</scope>
    <source>
        <strain>O157:H7 / EDL933 / ATCC 700927 / EHEC</strain>
    </source>
</reference>
<reference key="2">
    <citation type="journal article" date="2001" name="DNA Res.">
        <title>Complete genome sequence of enterohemorrhagic Escherichia coli O157:H7 and genomic comparison with a laboratory strain K-12.</title>
        <authorList>
            <person name="Hayashi T."/>
            <person name="Makino K."/>
            <person name="Ohnishi M."/>
            <person name="Kurokawa K."/>
            <person name="Ishii K."/>
            <person name="Yokoyama K."/>
            <person name="Han C.-G."/>
            <person name="Ohtsubo E."/>
            <person name="Nakayama K."/>
            <person name="Murata T."/>
            <person name="Tanaka M."/>
            <person name="Tobe T."/>
            <person name="Iida T."/>
            <person name="Takami H."/>
            <person name="Honda T."/>
            <person name="Sasakawa C."/>
            <person name="Ogasawara N."/>
            <person name="Yasunaga T."/>
            <person name="Kuhara S."/>
            <person name="Shiba T."/>
            <person name="Hattori M."/>
            <person name="Shinagawa H."/>
        </authorList>
    </citation>
    <scope>NUCLEOTIDE SEQUENCE [LARGE SCALE GENOMIC DNA]</scope>
    <source>
        <strain>O157:H7 / Sakai / RIMD 0509952 / EHEC</strain>
    </source>
</reference>
<comment type="function">
    <text evidence="1">Catalyzes the thiamine diphosphate-dependent decarboxylation of 2-oxoglutarate and the subsequent addition of the resulting succinic semialdehyde-thiamine pyrophosphate anion to isochorismate to yield 2-succinyl-5-enolpyruvyl-6-hydroxy-3-cyclohexene-1-carboxylate (SEPHCHC).</text>
</comment>
<comment type="catalytic activity">
    <reaction evidence="1">
        <text>isochorismate + 2-oxoglutarate + H(+) = 5-enolpyruvoyl-6-hydroxy-2-succinyl-cyclohex-3-ene-1-carboxylate + CO2</text>
        <dbReference type="Rhea" id="RHEA:25593"/>
        <dbReference type="ChEBI" id="CHEBI:15378"/>
        <dbReference type="ChEBI" id="CHEBI:16526"/>
        <dbReference type="ChEBI" id="CHEBI:16810"/>
        <dbReference type="ChEBI" id="CHEBI:29780"/>
        <dbReference type="ChEBI" id="CHEBI:58818"/>
        <dbReference type="EC" id="2.2.1.9"/>
    </reaction>
</comment>
<comment type="cofactor">
    <cofactor evidence="1">
        <name>Mg(2+)</name>
        <dbReference type="ChEBI" id="CHEBI:18420"/>
    </cofactor>
    <cofactor evidence="1">
        <name>Mn(2+)</name>
        <dbReference type="ChEBI" id="CHEBI:29035"/>
    </cofactor>
</comment>
<comment type="cofactor">
    <cofactor evidence="1">
        <name>thiamine diphosphate</name>
        <dbReference type="ChEBI" id="CHEBI:58937"/>
    </cofactor>
    <text evidence="1">Binds 1 thiamine pyrophosphate per subunit.</text>
</comment>
<comment type="pathway">
    <text evidence="1">Quinol/quinone metabolism; 1,4-dihydroxy-2-naphthoate biosynthesis; 1,4-dihydroxy-2-naphthoate from chorismate: step 2/7.</text>
</comment>
<comment type="pathway">
    <text evidence="1">Quinol/quinone metabolism; menaquinone biosynthesis.</text>
</comment>
<comment type="subunit">
    <text evidence="1">Homodimer.</text>
</comment>
<comment type="similarity">
    <text evidence="1">Belongs to the TPP enzyme family. MenD subfamily.</text>
</comment>
<gene>
    <name evidence="1" type="primary">menD</name>
    <name type="ordered locus">Z3524</name>
    <name type="ordered locus">ECs3152</name>
</gene>
<organism>
    <name type="scientific">Escherichia coli O157:H7</name>
    <dbReference type="NCBI Taxonomy" id="83334"/>
    <lineage>
        <taxon>Bacteria</taxon>
        <taxon>Pseudomonadati</taxon>
        <taxon>Pseudomonadota</taxon>
        <taxon>Gammaproteobacteria</taxon>
        <taxon>Enterobacterales</taxon>
        <taxon>Enterobacteriaceae</taxon>
        <taxon>Escherichia</taxon>
    </lineage>
</organism>